<protein>
    <recommendedName>
        <fullName>Prohibitin 1</fullName>
    </recommendedName>
</protein>
<sequence>MAAKVFESIGKFGLALAVAGGVVNSALYNVDAGHRAVIFDRFRGVQDIVVGEGTHFLIPWVQKPIIFDCRSRPRNVPVITGSKDLQNVNITLRILFRPVASQLPRIYTSIGEDYDERVLPSITTEILKSVVARFDAGELITQRELVSRQVSDDLTERAATFGLILDDVSLTHLTFGKEFTEAVEAKQVAQQEAERARFVVEKAEQQKKAAIISAEGDSKAAELIANSLATAGDGLIELRKLEAAEDIAYQLSRSRNITYLPAGQSVLLQLPQ</sequence>
<comment type="function">
    <text evidence="2 6 7">Protein with pleiotropic attributes mediated in a cell-compartment- and tissue-specific manner, which include the plasma membrane-associated cell signaling functions, mitochondrial chaperone, and transcriptional co-regulator of transcription factors in the nucleus. Plays a role in adipose tissue and glucose homeostasis in a sex-specific manner (By similarity) (PubMed:1996099). Contributes to pulmonary vascular remodeling by accelerating proliferation of pulmonary arterial smooth muscle cells (PubMed:32173312).</text>
</comment>
<comment type="function">
    <text evidence="1 2">In the mitochondria, together with PHB2, forms large ring complexes (prohibitin complexes) in the inner mitochondrial membrane (IMM) and functions as a chaperone protein that stabilizes mitochondrial respiratory enzymes and maintains mitochondrial integrity in the IMM, which is required for mitochondrial morphogenesis, neuronal survival, and normal lifespan. The prohibitin complex, with DNAJC19, regulates cardiolipin remodeling and the protein turnover of OMA1 in a cardiolipin-binding manner. Regulates mitochondrial respiration activity playing a role in cellular aging. The prohibitin complex plays a role of mitophagy receptor involved in targeting mitochondria for autophagic degradation (By similarity). Involved in mitochondrial-mediated antiviral innate immunity, activates RIG-I-mediated signal transduction and production of IFNB1 and pro-inflammatory cytokine IL6 (By similarity).</text>
</comment>
<comment type="function">
    <text evidence="1">In the nucleus, acts as a transcription coregulator, enhances promoter binding by TP53, a transcription factor it activates, but reduces the promoter binding by E2F1, a transcription factor it represses. Interacts with STAT3 to affect IL17 secretion in T-helper Th17 cells.</text>
</comment>
<comment type="function">
    <text evidence="2">In the plasma membrane, cooperates with CD86 to mediate CD86-signaling in B lymphocytes that regulates the level of IgG1 produced through the activation of distal signaling intermediates. Upon CD40 engagement, required to activate NF-kappa-B signaling pathway via phospholipase C and protein kinase C activation.</text>
</comment>
<comment type="subunit">
    <text evidence="1 2">The mitochondrial prohibitin complex consists of two subunits (PHB1 and PHB2), assembled into a membrane-associated ring-shaped supercomplex of approximately 1 mDa. Interacts with STOML2. Interacts with MAP1LC3B (membrane-bound form LC3-II); the interaction requires PHB2 and takes place upon Parkin-mediated mitochondrial damage. Interacts with STAT3 (unphosphorylated or phosphorylated at 'Ser-727'). Interacts with CLPB (By similarity). Interacts with CD86 (via cytoplasmic domain); the interactions increases after priming with CD40 (By similarity).</text>
</comment>
<comment type="subcellular location">
    <subcellularLocation>
        <location evidence="4">Mitochondrion inner membrane</location>
    </subcellularLocation>
    <subcellularLocation>
        <location evidence="1">Nucleus</location>
    </subcellularLocation>
    <subcellularLocation>
        <location evidence="1">Cytoplasm</location>
    </subcellularLocation>
    <subcellularLocation>
        <location evidence="1">Cell membrane</location>
    </subcellularLocation>
</comment>
<comment type="tissue specificity">
    <text evidence="5 6 7">Expressed in brain, heart, intestine, kidney, liver, skeletal muscle. Highest levels in heart, liver, kidney and intestine. Also expressed in flagella of epididymal sperm. Expressed in lung tissue and pulmonary artery smooth muscle (at protein level) (PubMed:32173312).</text>
</comment>
<comment type="developmental stage">
    <text evidence="4">Throughout gestation, highly expressed in brown fat, heart, liver, developing renal tubules and neurons, and detected at lower levels in tissues such as lung and exocrine pancreas.</text>
</comment>
<comment type="induction">
    <text evidence="7">Induced by PDGF.</text>
</comment>
<comment type="similarity">
    <text evidence="8">Belongs to the prohibitin family.</text>
</comment>
<dbReference type="EMBL" id="M61219">
    <property type="protein sequence ID" value="AAA63500.1"/>
    <property type="molecule type" value="mRNA"/>
</dbReference>
<dbReference type="EMBL" id="BC072518">
    <property type="protein sequence ID" value="AAH72518.1"/>
    <property type="molecule type" value="mRNA"/>
</dbReference>
<dbReference type="EMBL" id="BC097304">
    <property type="protein sequence ID" value="AAH97304.1"/>
    <property type="molecule type" value="mRNA"/>
</dbReference>
<dbReference type="PIR" id="A39682">
    <property type="entry name" value="A39682"/>
</dbReference>
<dbReference type="RefSeq" id="NP_001417005.1">
    <property type="nucleotide sequence ID" value="NM_001430076.1"/>
</dbReference>
<dbReference type="RefSeq" id="NP_114039.1">
    <property type="nucleotide sequence ID" value="NM_031851.3"/>
</dbReference>
<dbReference type="RefSeq" id="XP_038941191.1">
    <property type="nucleotide sequence ID" value="XM_039085263.2"/>
</dbReference>
<dbReference type="SMR" id="P67779"/>
<dbReference type="BioGRID" id="247383">
    <property type="interactions" value="7"/>
</dbReference>
<dbReference type="FunCoup" id="P67779">
    <property type="interactions" value="2497"/>
</dbReference>
<dbReference type="IntAct" id="P67779">
    <property type="interactions" value="5"/>
</dbReference>
<dbReference type="MINT" id="P67779"/>
<dbReference type="STRING" id="10116.ENSRNOP00000066502"/>
<dbReference type="GlyGen" id="P67779">
    <property type="glycosylation" value="2 sites, 1 O-linked glycan (2 sites)"/>
</dbReference>
<dbReference type="iPTMnet" id="P67779"/>
<dbReference type="PhosphoSitePlus" id="P67779"/>
<dbReference type="jPOST" id="P67779"/>
<dbReference type="PaxDb" id="10116-ENSRNOP00000066502"/>
<dbReference type="DNASU" id="25344"/>
<dbReference type="Ensembl" id="ENSRNOT00000075733.3">
    <property type="protein sequence ID" value="ENSRNOP00000066502.1"/>
    <property type="gene ID" value="ENSRNOG00000046799.3"/>
</dbReference>
<dbReference type="GeneID" id="25344"/>
<dbReference type="KEGG" id="rno:25344"/>
<dbReference type="AGR" id="RGD:3322"/>
<dbReference type="CTD" id="5245"/>
<dbReference type="RGD" id="3322">
    <property type="gene designation" value="Phb1"/>
</dbReference>
<dbReference type="eggNOG" id="KOG3083">
    <property type="taxonomic scope" value="Eukaryota"/>
</dbReference>
<dbReference type="GeneTree" id="ENSGT00950000183070"/>
<dbReference type="HOGENOM" id="CLU_047969_0_0_1"/>
<dbReference type="InParanoid" id="P67779"/>
<dbReference type="OMA" id="YEFRLVT"/>
<dbReference type="OrthoDB" id="275637at2759"/>
<dbReference type="PhylomeDB" id="P67779"/>
<dbReference type="Reactome" id="R-RNO-5673000">
    <property type="pathway name" value="RAF activation"/>
</dbReference>
<dbReference type="Reactome" id="R-RNO-8949664">
    <property type="pathway name" value="Processing of SMDT1"/>
</dbReference>
<dbReference type="PRO" id="PR:P67779"/>
<dbReference type="Proteomes" id="UP000002494">
    <property type="component" value="Chromosome 10"/>
</dbReference>
<dbReference type="Bgee" id="ENSRNOG00000046799">
    <property type="expression patterns" value="Expressed in heart and 20 other cell types or tissues"/>
</dbReference>
<dbReference type="GO" id="GO:0009986">
    <property type="term" value="C:cell surface"/>
    <property type="evidence" value="ECO:0000250"/>
    <property type="project" value="UniProtKB"/>
</dbReference>
<dbReference type="GO" id="GO:0005737">
    <property type="term" value="C:cytoplasm"/>
    <property type="evidence" value="ECO:0000266"/>
    <property type="project" value="RGD"/>
</dbReference>
<dbReference type="GO" id="GO:0005769">
    <property type="term" value="C:early endosome"/>
    <property type="evidence" value="ECO:0000266"/>
    <property type="project" value="RGD"/>
</dbReference>
<dbReference type="GO" id="GO:0070382">
    <property type="term" value="C:exocytic vesicle"/>
    <property type="evidence" value="ECO:0000266"/>
    <property type="project" value="RGD"/>
</dbReference>
<dbReference type="GO" id="GO:0098891">
    <property type="term" value="C:extrinsic component of presynaptic active zone membrane"/>
    <property type="evidence" value="ECO:0000314"/>
    <property type="project" value="SynGO"/>
</dbReference>
<dbReference type="GO" id="GO:0098982">
    <property type="term" value="C:GABA-ergic synapse"/>
    <property type="evidence" value="ECO:0000314"/>
    <property type="project" value="SynGO"/>
</dbReference>
<dbReference type="GO" id="GO:0098978">
    <property type="term" value="C:glutamatergic synapse"/>
    <property type="evidence" value="ECO:0000314"/>
    <property type="project" value="SynGO"/>
</dbReference>
<dbReference type="GO" id="GO:0005743">
    <property type="term" value="C:mitochondrial inner membrane"/>
    <property type="evidence" value="ECO:0000266"/>
    <property type="project" value="RGD"/>
</dbReference>
<dbReference type="GO" id="GO:0005741">
    <property type="term" value="C:mitochondrial outer membrane"/>
    <property type="evidence" value="ECO:0000314"/>
    <property type="project" value="RGD"/>
</dbReference>
<dbReference type="GO" id="GO:0035632">
    <property type="term" value="C:mitochondrial prohibitin complex"/>
    <property type="evidence" value="ECO:0000250"/>
    <property type="project" value="UniProtKB"/>
</dbReference>
<dbReference type="GO" id="GO:0005739">
    <property type="term" value="C:mitochondrion"/>
    <property type="evidence" value="ECO:0000266"/>
    <property type="project" value="RGD"/>
</dbReference>
<dbReference type="GO" id="GO:0005654">
    <property type="term" value="C:nucleoplasm"/>
    <property type="evidence" value="ECO:0000266"/>
    <property type="project" value="RGD"/>
</dbReference>
<dbReference type="GO" id="GO:0005634">
    <property type="term" value="C:nucleus"/>
    <property type="evidence" value="ECO:0000266"/>
    <property type="project" value="RGD"/>
</dbReference>
<dbReference type="GO" id="GO:0005886">
    <property type="term" value="C:plasma membrane"/>
    <property type="evidence" value="ECO:0000250"/>
    <property type="project" value="UniProtKB"/>
</dbReference>
<dbReference type="GO" id="GO:0014069">
    <property type="term" value="C:postsynaptic density"/>
    <property type="evidence" value="ECO:0000314"/>
    <property type="project" value="SynGO"/>
</dbReference>
<dbReference type="GO" id="GO:0045202">
    <property type="term" value="C:synapse"/>
    <property type="evidence" value="ECO:0000314"/>
    <property type="project" value="SynGO"/>
</dbReference>
<dbReference type="GO" id="GO:0001850">
    <property type="term" value="F:complement component C3a binding"/>
    <property type="evidence" value="ECO:0000266"/>
    <property type="project" value="RGD"/>
</dbReference>
<dbReference type="GO" id="GO:0001851">
    <property type="term" value="F:complement component C3b binding"/>
    <property type="evidence" value="ECO:0000266"/>
    <property type="project" value="RGD"/>
</dbReference>
<dbReference type="GO" id="GO:0019899">
    <property type="term" value="F:enzyme binding"/>
    <property type="evidence" value="ECO:0000266"/>
    <property type="project" value="RGD"/>
</dbReference>
<dbReference type="GO" id="GO:0042826">
    <property type="term" value="F:histone deacetylase binding"/>
    <property type="evidence" value="ECO:0000266"/>
    <property type="project" value="RGD"/>
</dbReference>
<dbReference type="GO" id="GO:0046982">
    <property type="term" value="F:protein heterodimerization activity"/>
    <property type="evidence" value="ECO:0000266"/>
    <property type="project" value="RGD"/>
</dbReference>
<dbReference type="GO" id="GO:0031871">
    <property type="term" value="F:proteinase activated receptor binding"/>
    <property type="evidence" value="ECO:0000266"/>
    <property type="project" value="RGD"/>
</dbReference>
<dbReference type="GO" id="GO:0003714">
    <property type="term" value="F:transcription corepressor activity"/>
    <property type="evidence" value="ECO:0000266"/>
    <property type="project" value="RGD"/>
</dbReference>
<dbReference type="GO" id="GO:0031100">
    <property type="term" value="P:animal organ regeneration"/>
    <property type="evidence" value="ECO:0000270"/>
    <property type="project" value="RGD"/>
</dbReference>
<dbReference type="GO" id="GO:0140374">
    <property type="term" value="P:antiviral innate immune response"/>
    <property type="evidence" value="ECO:0000266"/>
    <property type="project" value="RGD"/>
</dbReference>
<dbReference type="GO" id="GO:0042113">
    <property type="term" value="P:B cell activation"/>
    <property type="evidence" value="ECO:0000250"/>
    <property type="project" value="UniProtKB"/>
</dbReference>
<dbReference type="GO" id="GO:0071354">
    <property type="term" value="P:cellular response to interleukin-6"/>
    <property type="evidence" value="ECO:0000266"/>
    <property type="project" value="RGD"/>
</dbReference>
<dbReference type="GO" id="GO:0071897">
    <property type="term" value="P:DNA biosynthetic process"/>
    <property type="evidence" value="ECO:0000266"/>
    <property type="project" value="RGD"/>
</dbReference>
<dbReference type="GO" id="GO:0040029">
    <property type="term" value="P:epigenetic regulation of gene expression"/>
    <property type="evidence" value="ECO:0000266"/>
    <property type="project" value="RGD"/>
</dbReference>
<dbReference type="GO" id="GO:0007005">
    <property type="term" value="P:mitochondrion organization"/>
    <property type="evidence" value="ECO:0000266"/>
    <property type="project" value="RGD"/>
</dbReference>
<dbReference type="GO" id="GO:0044830">
    <property type="term" value="P:modulation by host of viral RNA genome replication"/>
    <property type="evidence" value="ECO:0000266"/>
    <property type="project" value="RGD"/>
</dbReference>
<dbReference type="GO" id="GO:0060766">
    <property type="term" value="P:negative regulation of androgen receptor signaling pathway"/>
    <property type="evidence" value="ECO:0000266"/>
    <property type="project" value="RGD"/>
</dbReference>
<dbReference type="GO" id="GO:0043066">
    <property type="term" value="P:negative regulation of apoptotic process"/>
    <property type="evidence" value="ECO:0000315"/>
    <property type="project" value="RGD"/>
</dbReference>
<dbReference type="GO" id="GO:0030308">
    <property type="term" value="P:negative regulation of cell growth"/>
    <property type="evidence" value="ECO:0000266"/>
    <property type="project" value="RGD"/>
</dbReference>
<dbReference type="GO" id="GO:0008285">
    <property type="term" value="P:negative regulation of cell population proliferation"/>
    <property type="evidence" value="ECO:0000315"/>
    <property type="project" value="RGD"/>
</dbReference>
<dbReference type="GO" id="GO:0045892">
    <property type="term" value="P:negative regulation of DNA-templated transcription"/>
    <property type="evidence" value="ECO:0000266"/>
    <property type="project" value="RGD"/>
</dbReference>
<dbReference type="GO" id="GO:0070373">
    <property type="term" value="P:negative regulation of ERK1 and ERK2 cascade"/>
    <property type="evidence" value="ECO:0000266"/>
    <property type="project" value="RGD"/>
</dbReference>
<dbReference type="GO" id="GO:0010629">
    <property type="term" value="P:negative regulation of gene expression"/>
    <property type="evidence" value="ECO:0000315"/>
    <property type="project" value="RGD"/>
</dbReference>
<dbReference type="GO" id="GO:2000323">
    <property type="term" value="P:negative regulation of nuclear receptor-mediated glucocorticoid signaling pathway"/>
    <property type="evidence" value="ECO:0000266"/>
    <property type="project" value="RGD"/>
</dbReference>
<dbReference type="GO" id="GO:0042177">
    <property type="term" value="P:negative regulation of protein catabolic process"/>
    <property type="evidence" value="ECO:0000266"/>
    <property type="project" value="RGD"/>
</dbReference>
<dbReference type="GO" id="GO:0010944">
    <property type="term" value="P:negative regulation of transcription by competitive promoter binding"/>
    <property type="evidence" value="ECO:0000266"/>
    <property type="project" value="RGD"/>
</dbReference>
<dbReference type="GO" id="GO:0000122">
    <property type="term" value="P:negative regulation of transcription by RNA polymerase II"/>
    <property type="evidence" value="ECO:0000266"/>
    <property type="project" value="RGD"/>
</dbReference>
<dbReference type="GO" id="GO:0001552">
    <property type="term" value="P:ovarian follicle atresia"/>
    <property type="evidence" value="ECO:0000270"/>
    <property type="project" value="RGD"/>
</dbReference>
<dbReference type="GO" id="GO:0001541">
    <property type="term" value="P:ovarian follicle development"/>
    <property type="evidence" value="ECO:0000270"/>
    <property type="project" value="RGD"/>
</dbReference>
<dbReference type="GO" id="GO:0045917">
    <property type="term" value="P:positive regulation of complement activation"/>
    <property type="evidence" value="ECO:0000266"/>
    <property type="project" value="RGD"/>
</dbReference>
<dbReference type="GO" id="GO:0045893">
    <property type="term" value="P:positive regulation of DNA-templated transcription"/>
    <property type="evidence" value="ECO:0000266"/>
    <property type="project" value="RGD"/>
</dbReference>
<dbReference type="GO" id="GO:0070374">
    <property type="term" value="P:positive regulation of ERK1 and ERK2 cascade"/>
    <property type="evidence" value="ECO:0000266"/>
    <property type="project" value="RGD"/>
</dbReference>
<dbReference type="GO" id="GO:0045745">
    <property type="term" value="P:positive regulation of G protein-coupled receptor signaling pathway"/>
    <property type="evidence" value="ECO:0000266"/>
    <property type="project" value="RGD"/>
</dbReference>
<dbReference type="GO" id="GO:0010628">
    <property type="term" value="P:positive regulation of gene expression"/>
    <property type="evidence" value="ECO:0000266"/>
    <property type="project" value="RGD"/>
</dbReference>
<dbReference type="GO" id="GO:0002639">
    <property type="term" value="P:positive regulation of immunoglobulin production"/>
    <property type="evidence" value="ECO:0000250"/>
    <property type="project" value="UniProtKB"/>
</dbReference>
<dbReference type="GO" id="GO:0032740">
    <property type="term" value="P:positive regulation of interleukin-17 production"/>
    <property type="evidence" value="ECO:0000250"/>
    <property type="project" value="UniProtKB"/>
</dbReference>
<dbReference type="GO" id="GO:0043525">
    <property type="term" value="P:positive regulation of neuron apoptotic process"/>
    <property type="evidence" value="ECO:0000266"/>
    <property type="project" value="RGD"/>
</dbReference>
<dbReference type="GO" id="GO:1901224">
    <property type="term" value="P:positive regulation of non-canonical NF-kappaB signal transduction"/>
    <property type="evidence" value="ECO:0000250"/>
    <property type="project" value="UniProtKB"/>
</dbReference>
<dbReference type="GO" id="GO:0051897">
    <property type="term" value="P:positive regulation of phosphatidylinositol 3-kinase/protein kinase B signal transduction"/>
    <property type="evidence" value="ECO:0000315"/>
    <property type="project" value="UniProtKB"/>
</dbReference>
<dbReference type="GO" id="GO:0048661">
    <property type="term" value="P:positive regulation of smooth muscle cell proliferation"/>
    <property type="evidence" value="ECO:0000315"/>
    <property type="project" value="UniProtKB"/>
</dbReference>
<dbReference type="GO" id="GO:0050847">
    <property type="term" value="P:progesterone receptor signaling pathway"/>
    <property type="evidence" value="ECO:0000266"/>
    <property type="project" value="RGD"/>
</dbReference>
<dbReference type="GO" id="GO:0050821">
    <property type="term" value="P:protein stabilization"/>
    <property type="evidence" value="ECO:0000266"/>
    <property type="project" value="RGD"/>
</dbReference>
<dbReference type="GO" id="GO:0006355">
    <property type="term" value="P:regulation of DNA-templated transcription"/>
    <property type="evidence" value="ECO:0000266"/>
    <property type="project" value="RGD"/>
</dbReference>
<dbReference type="GO" id="GO:0034097">
    <property type="term" value="P:response to cytokine"/>
    <property type="evidence" value="ECO:0000270"/>
    <property type="project" value="RGD"/>
</dbReference>
<dbReference type="GO" id="GO:0045471">
    <property type="term" value="P:response to ethanol"/>
    <property type="evidence" value="ECO:0000270"/>
    <property type="project" value="RGD"/>
</dbReference>
<dbReference type="GO" id="GO:0035902">
    <property type="term" value="P:response to immobilization stress"/>
    <property type="evidence" value="ECO:0000270"/>
    <property type="project" value="RGD"/>
</dbReference>
<dbReference type="GO" id="GO:0043434">
    <property type="term" value="P:response to peptide hormone"/>
    <property type="evidence" value="ECO:0000270"/>
    <property type="project" value="RGD"/>
</dbReference>
<dbReference type="GO" id="GO:0009410">
    <property type="term" value="P:response to xenobiotic stimulus"/>
    <property type="evidence" value="ECO:0000270"/>
    <property type="project" value="RGD"/>
</dbReference>
<dbReference type="GO" id="GO:0039529">
    <property type="term" value="P:RIG-I signaling pathway"/>
    <property type="evidence" value="ECO:0000266"/>
    <property type="project" value="RGD"/>
</dbReference>
<dbReference type="GO" id="GO:0046718">
    <property type="term" value="P:symbiont entry into host cell"/>
    <property type="evidence" value="ECO:0000266"/>
    <property type="project" value="RGD"/>
</dbReference>
<dbReference type="GO" id="GO:0072538">
    <property type="term" value="P:T-helper 17 type immune response"/>
    <property type="evidence" value="ECO:0000250"/>
    <property type="project" value="UniProtKB"/>
</dbReference>
<dbReference type="CDD" id="cd03401">
    <property type="entry name" value="SPFH_prohibitin"/>
    <property type="match status" value="1"/>
</dbReference>
<dbReference type="FunFam" id="3.30.479.30:FF:000001">
    <property type="entry name" value="Prohibitin 2"/>
    <property type="match status" value="1"/>
</dbReference>
<dbReference type="Gene3D" id="3.30.479.30">
    <property type="entry name" value="Band 7 domain"/>
    <property type="match status" value="1"/>
</dbReference>
<dbReference type="InterPro" id="IPR001107">
    <property type="entry name" value="Band_7"/>
</dbReference>
<dbReference type="InterPro" id="IPR036013">
    <property type="entry name" value="Band_7/SPFH_dom_sf"/>
</dbReference>
<dbReference type="InterPro" id="IPR000163">
    <property type="entry name" value="Prohibitin"/>
</dbReference>
<dbReference type="PANTHER" id="PTHR23222">
    <property type="entry name" value="PROHIBITIN"/>
    <property type="match status" value="1"/>
</dbReference>
<dbReference type="PANTHER" id="PTHR23222:SF0">
    <property type="entry name" value="PROHIBITIN 1"/>
    <property type="match status" value="1"/>
</dbReference>
<dbReference type="Pfam" id="PF01145">
    <property type="entry name" value="Band_7"/>
    <property type="match status" value="1"/>
</dbReference>
<dbReference type="PRINTS" id="PR00679">
    <property type="entry name" value="PROHIBITIN"/>
</dbReference>
<dbReference type="SMART" id="SM00244">
    <property type="entry name" value="PHB"/>
    <property type="match status" value="1"/>
</dbReference>
<dbReference type="SUPFAM" id="SSF117892">
    <property type="entry name" value="Band 7/SPFH domain"/>
    <property type="match status" value="1"/>
</dbReference>
<feature type="initiator methionine" description="Removed" evidence="1">
    <location>
        <position position="1"/>
    </location>
</feature>
<feature type="chain" id="PRO_0000213880" description="Prohibitin 1">
    <location>
        <begin position="2"/>
        <end position="272"/>
    </location>
</feature>
<feature type="coiled-coil region" evidence="3">
    <location>
        <begin position="177"/>
        <end position="211"/>
    </location>
</feature>
<feature type="modified residue" description="N-acetylalanine" evidence="1">
    <location>
        <position position="2"/>
    </location>
</feature>
<feature type="modified residue" description="Phosphothreonine" evidence="1">
    <location>
        <position position="91"/>
    </location>
</feature>
<feature type="modified residue" description="N6-acetyllysine" evidence="2">
    <location>
        <position position="128"/>
    </location>
</feature>
<feature type="modified residue" description="N6-acetyllysine" evidence="2">
    <location>
        <position position="186"/>
    </location>
</feature>
<feature type="modified residue" description="N6-acetyllysine; alternate" evidence="1">
    <location>
        <position position="202"/>
    </location>
</feature>
<feature type="modified residue" description="N6-succinyllysine; alternate" evidence="2">
    <location>
        <position position="202"/>
    </location>
</feature>
<feature type="modified residue" description="Phosphotyrosine" evidence="10">
    <location>
        <position position="249"/>
    </location>
</feature>
<evidence type="ECO:0000250" key="1">
    <source>
        <dbReference type="UniProtKB" id="P35232"/>
    </source>
</evidence>
<evidence type="ECO:0000250" key="2">
    <source>
        <dbReference type="UniProtKB" id="P67778"/>
    </source>
</evidence>
<evidence type="ECO:0000255" key="3"/>
<evidence type="ECO:0000269" key="4">
    <source>
    </source>
</evidence>
<evidence type="ECO:0000269" key="5">
    <source>
    </source>
</evidence>
<evidence type="ECO:0000269" key="6">
    <source>
    </source>
</evidence>
<evidence type="ECO:0000269" key="7">
    <source>
    </source>
</evidence>
<evidence type="ECO:0000305" key="8"/>
<evidence type="ECO:0000312" key="9">
    <source>
        <dbReference type="RGD" id="3322"/>
    </source>
</evidence>
<evidence type="ECO:0007744" key="10">
    <source>
    </source>
</evidence>
<organism>
    <name type="scientific">Rattus norvegicus</name>
    <name type="common">Rat</name>
    <dbReference type="NCBI Taxonomy" id="10116"/>
    <lineage>
        <taxon>Eukaryota</taxon>
        <taxon>Metazoa</taxon>
        <taxon>Chordata</taxon>
        <taxon>Craniata</taxon>
        <taxon>Vertebrata</taxon>
        <taxon>Euteleostomi</taxon>
        <taxon>Mammalia</taxon>
        <taxon>Eutheria</taxon>
        <taxon>Euarchontoglires</taxon>
        <taxon>Glires</taxon>
        <taxon>Rodentia</taxon>
        <taxon>Myomorpha</taxon>
        <taxon>Muroidea</taxon>
        <taxon>Muridae</taxon>
        <taxon>Murinae</taxon>
        <taxon>Rattus</taxon>
    </lineage>
</organism>
<gene>
    <name evidence="9" type="primary">Phb1</name>
    <name type="synonym">Phb</name>
</gene>
<proteinExistence type="evidence at protein level"/>
<reference key="1">
    <citation type="journal article" date="1991" name="Mol. Cell. Biol.">
        <title>Prohibitin, an evolutionarily conserved intracellular protein that blocks DNA synthesis in normal fibroblasts and HeLa cells.</title>
        <authorList>
            <person name="Nuell M.J."/>
            <person name="Stewart D.A."/>
            <person name="Walker L."/>
            <person name="Friedman V."/>
            <person name="Wood C.M."/>
            <person name="Owens G.A."/>
            <person name="Smith J.R."/>
            <person name="Schneider E.L."/>
            <person name="Dell'Orco R."/>
            <person name="Lumpkin C.K."/>
            <person name="Danner D.B."/>
            <person name="McClung J.K."/>
        </authorList>
    </citation>
    <scope>NUCLEOTIDE SEQUENCE [MRNA]</scope>
    <scope>FUNCTION</scope>
    <scope>TISSUE SPECIFICITY</scope>
</reference>
<reference key="2">
    <citation type="journal article" date="2004" name="Genome Res.">
        <title>The status, quality, and expansion of the NIH full-length cDNA project: the Mammalian Gene Collection (MGC).</title>
        <authorList>
            <consortium name="The MGC Project Team"/>
        </authorList>
    </citation>
    <scope>NUCLEOTIDE SEQUENCE [LARGE SCALE MRNA]</scope>
    <source>
        <tissue>Heart</tissue>
        <tissue>Placenta</tissue>
    </source>
</reference>
<reference key="3">
    <citation type="submission" date="2006-11" db="UniProtKB">
        <authorList>
            <person name="Lubec G."/>
            <person name="Afjehi-Sadat L."/>
        </authorList>
    </citation>
    <scope>PROTEIN SEQUENCE OF 12-35; 94-105; 158-177 AND 220-253</scope>
    <scope>IDENTIFICATION BY MASS SPECTROMETRY</scope>
    <source>
        <strain>Sprague-Dawley</strain>
        <tissue>Spinal cord</tissue>
    </source>
</reference>
<reference key="4">
    <citation type="journal article" date="2001" name="Exp. Cell Res.">
        <title>Mammalian prohibitin proteins respond to mitochondrial stress and decrease during cellular senescence.</title>
        <authorList>
            <person name="Coates P.J."/>
            <person name="Nenutil R."/>
            <person name="McGregor A."/>
            <person name="Picksley S.M."/>
            <person name="Crouch D.H."/>
            <person name="Hall P.A."/>
            <person name="Wright E.G."/>
        </authorList>
    </citation>
    <scope>INTERACTION WITH PHB2</scope>
    <scope>SUBCELLULAR LOCATION</scope>
    <scope>DEVELOPMENTAL STAGE</scope>
</reference>
<reference key="5">
    <citation type="journal article" date="2009" name="Reproduction">
        <title>Identification of novel immunodominant epididymal sperm proteins using combinatorial approach.</title>
        <authorList>
            <person name="Khan S.A."/>
            <person name="Suryawanshi A.R."/>
            <person name="Ranpura S.A."/>
            <person name="Jadhav S.V."/>
            <person name="Khole V.V."/>
        </authorList>
    </citation>
    <scope>IDENTIFICATION BY MASS SPECTROMETRY</scope>
    <scope>TISSUE SPECIFICITY</scope>
</reference>
<reference key="6">
    <citation type="journal article" date="2012" name="Nat. Commun.">
        <title>Quantitative maps of protein phosphorylation sites across 14 different rat organs and tissues.</title>
        <authorList>
            <person name="Lundby A."/>
            <person name="Secher A."/>
            <person name="Lage K."/>
            <person name="Nordsborg N.B."/>
            <person name="Dmytriyev A."/>
            <person name="Lundby C."/>
            <person name="Olsen J.V."/>
        </authorList>
    </citation>
    <scope>PHOSPHORYLATION [LARGE SCALE ANALYSIS] AT TYR-249</scope>
    <scope>IDENTIFICATION BY MASS SPECTROMETRY [LARGE SCALE ANALYSIS]</scope>
</reference>
<reference key="7">
    <citation type="journal article" date="2020" name="Life Sci.">
        <title>Regulatory effects of Prohibitin 1 on proliferation and apoptosis of pulmonary arterial smooth muscle cells. in monocrotaline-induced PAH rats.</title>
        <authorList>
            <person name="Cao Y.Y."/>
            <person name="Ba H.X."/>
            <person name="Li Y."/>
            <person name="Tang S.Y."/>
            <person name="Luo Z.Q."/>
            <person name="Li X.H."/>
        </authorList>
    </citation>
    <scope>FUNCTION</scope>
    <scope>TISSUE SPECIFICITY</scope>
    <scope>INDUCTION BY PGF</scope>
</reference>
<name>PHB1_RAT</name>
<accession>P67779</accession>
<accession>P24142</accession>
<accession>Q4V8M6</accession>
<keyword id="KW-0007">Acetylation</keyword>
<keyword id="KW-1003">Cell membrane</keyword>
<keyword id="KW-0175">Coiled coil</keyword>
<keyword id="KW-0963">Cytoplasm</keyword>
<keyword id="KW-0903">Direct protein sequencing</keyword>
<keyword id="KW-0237">DNA synthesis</keyword>
<keyword id="KW-0472">Membrane</keyword>
<keyword id="KW-0496">Mitochondrion</keyword>
<keyword id="KW-0999">Mitochondrion inner membrane</keyword>
<keyword id="KW-0539">Nucleus</keyword>
<keyword id="KW-0597">Phosphoprotein</keyword>
<keyword id="KW-1185">Reference proteome</keyword>